<evidence type="ECO:0000250" key="1">
    <source>
        <dbReference type="UniProtKB" id="Q8ZWV0"/>
    </source>
</evidence>
<evidence type="ECO:0000250" key="2">
    <source>
        <dbReference type="UniProtKB" id="Q96YC2"/>
    </source>
</evidence>
<evidence type="ECO:0000255" key="3">
    <source>
        <dbReference type="PROSITE-ProRule" id="PRU00797"/>
    </source>
</evidence>
<evidence type="ECO:0000305" key="4"/>
<name>GLCAE_SULAC</name>
<reference key="1">
    <citation type="journal article" date="2005" name="J. Bacteriol.">
        <title>The genome of Sulfolobus acidocaldarius, a model organism of the Crenarchaeota.</title>
        <authorList>
            <person name="Chen L."/>
            <person name="Bruegger K."/>
            <person name="Skovgaard M."/>
            <person name="Redder P."/>
            <person name="She Q."/>
            <person name="Torarinsson E."/>
            <person name="Greve B."/>
            <person name="Awayez M."/>
            <person name="Zibat A."/>
            <person name="Klenk H.-P."/>
            <person name="Garrett R.A."/>
        </authorList>
    </citation>
    <scope>NUCLEOTIDE SEQUENCE [LARGE SCALE GENOMIC DNA]</scope>
    <source>
        <strain>ATCC 33909 / DSM 639 / JCM 8929 / NBRC 15157 / NCIMB 11770</strain>
    </source>
</reference>
<dbReference type="EC" id="5.1.3.42" evidence="2"/>
<dbReference type="EMBL" id="CP000077">
    <property type="protein sequence ID" value="AAY79572.1"/>
    <property type="molecule type" value="Genomic_DNA"/>
</dbReference>
<dbReference type="RefSeq" id="WP_011277073.1">
    <property type="nucleotide sequence ID" value="NC_007181.1"/>
</dbReference>
<dbReference type="SMR" id="Q4JCA7"/>
<dbReference type="STRING" id="330779.Saci_0151"/>
<dbReference type="GeneID" id="14550680"/>
<dbReference type="KEGG" id="sai:Saci_0151"/>
<dbReference type="PATRIC" id="fig|330779.12.peg.143"/>
<dbReference type="eggNOG" id="arCOG00052">
    <property type="taxonomic scope" value="Archaea"/>
</dbReference>
<dbReference type="HOGENOM" id="CLU_059687_0_0_2"/>
<dbReference type="Proteomes" id="UP000001018">
    <property type="component" value="Chromosome"/>
</dbReference>
<dbReference type="GO" id="GO:0097367">
    <property type="term" value="F:carbohydrate derivative binding"/>
    <property type="evidence" value="ECO:0007669"/>
    <property type="project" value="InterPro"/>
</dbReference>
<dbReference type="GO" id="GO:0004347">
    <property type="term" value="F:glucose-6-phosphate isomerase activity"/>
    <property type="evidence" value="ECO:0007669"/>
    <property type="project" value="InterPro"/>
</dbReference>
<dbReference type="GO" id="GO:0004476">
    <property type="term" value="F:mannose-6-phosphate isomerase activity"/>
    <property type="evidence" value="ECO:0007669"/>
    <property type="project" value="InterPro"/>
</dbReference>
<dbReference type="GO" id="GO:1901135">
    <property type="term" value="P:carbohydrate derivative metabolic process"/>
    <property type="evidence" value="ECO:0007669"/>
    <property type="project" value="InterPro"/>
</dbReference>
<dbReference type="GO" id="GO:0005975">
    <property type="term" value="P:carbohydrate metabolic process"/>
    <property type="evidence" value="ECO:0007669"/>
    <property type="project" value="InterPro"/>
</dbReference>
<dbReference type="CDD" id="cd05017">
    <property type="entry name" value="SIS_PGI_PMI_1"/>
    <property type="match status" value="1"/>
</dbReference>
<dbReference type="CDD" id="cd05637">
    <property type="entry name" value="SIS_PGI_PMI_2"/>
    <property type="match status" value="1"/>
</dbReference>
<dbReference type="Gene3D" id="3.40.50.10490">
    <property type="entry name" value="Glucose-6-phosphate isomerase like protein, domain 1"/>
    <property type="match status" value="2"/>
</dbReference>
<dbReference type="InterPro" id="IPR019490">
    <property type="entry name" value="Glu6P/Mann6P_isomerase_C"/>
</dbReference>
<dbReference type="InterPro" id="IPR001347">
    <property type="entry name" value="SIS_dom"/>
</dbReference>
<dbReference type="InterPro" id="IPR046348">
    <property type="entry name" value="SIS_dom_sf"/>
</dbReference>
<dbReference type="InterPro" id="IPR035484">
    <property type="entry name" value="SIS_PGI/PMI_1"/>
</dbReference>
<dbReference type="NCBIfam" id="TIGR02128">
    <property type="entry name" value="G6PI_arch"/>
    <property type="match status" value="1"/>
</dbReference>
<dbReference type="NCBIfam" id="NF006422">
    <property type="entry name" value="PRK08674.1-1"/>
    <property type="match status" value="1"/>
</dbReference>
<dbReference type="Pfam" id="PF10432">
    <property type="entry name" value="bact-PGI_C"/>
    <property type="match status" value="1"/>
</dbReference>
<dbReference type="Pfam" id="PF01380">
    <property type="entry name" value="SIS"/>
    <property type="match status" value="1"/>
</dbReference>
<dbReference type="SUPFAM" id="SSF53697">
    <property type="entry name" value="SIS domain"/>
    <property type="match status" value="1"/>
</dbReference>
<dbReference type="PROSITE" id="PS51464">
    <property type="entry name" value="SIS"/>
    <property type="match status" value="1"/>
</dbReference>
<accession>Q4JCA7</accession>
<organism>
    <name type="scientific">Sulfolobus acidocaldarius (strain ATCC 33909 / DSM 639 / JCM 8929 / NBRC 15157 / NCIMB 11770)</name>
    <dbReference type="NCBI Taxonomy" id="330779"/>
    <lineage>
        <taxon>Archaea</taxon>
        <taxon>Thermoproteota</taxon>
        <taxon>Thermoprotei</taxon>
        <taxon>Sulfolobales</taxon>
        <taxon>Sulfolobaceae</taxon>
        <taxon>Sulfolobus</taxon>
    </lineage>
</organism>
<gene>
    <name type="ordered locus">Saci_0151</name>
</gene>
<keyword id="KW-0413">Isomerase</keyword>
<keyword id="KW-1185">Reference proteome</keyword>
<proteinExistence type="inferred from homology"/>
<feature type="chain" id="PRO_0000227795" description="D-glucosamine-6-phosphate 4-epimerase">
    <location>
        <begin position="1"/>
        <end position="306"/>
    </location>
</feature>
<feature type="domain" description="SIS" evidence="3">
    <location>
        <begin position="19"/>
        <end position="153"/>
    </location>
</feature>
<feature type="active site" description="Proton acceptor" evidence="1">
    <location>
        <position position="200"/>
    </location>
</feature>
<feature type="active site" description="Proton donor" evidence="1">
    <location>
        <position position="216"/>
    </location>
</feature>
<feature type="active site" description="Proton acceptor" evidence="4">
    <location>
        <position position="296"/>
    </location>
</feature>
<sequence>MSNVYERWKEFYEDAISRDIPGVKTAEKIAYFGIGGSGIPGEVLKLLDLPVEYKLFRSYKVNVDSKTTVVAVSYSGNTAETLAGVKRAQELGVKEIIVITSGGKLKEIAESKGYPLLSLPQGYQTRFIFPYIFTYLVRILNQSTGSNYRVQDLVDGIQDNFTMLSEVSTRIANRITGKVPIFYASDLLPIAERFKQEVNENAKYPAFFSQLPEANHNEIELYSSQQGNQFIPIVIPSDKIDEATASLINAELIYPPYKSILKNISGMFLIAGLASVKLASQLNIKAEELRIIPKIRERTHNLLMGG</sequence>
<protein>
    <recommendedName>
        <fullName evidence="2">D-glucosamine-6-phosphate 4-epimerase</fullName>
        <ecNumber evidence="2">5.1.3.42</ecNumber>
    </recommendedName>
</protein>
<comment type="function">
    <text evidence="2">Involved in the synthesis of UDP-N-acetylgalactosamine (UDP-GalNAc). Catalyzes the conversion of glucosamine-6-phosphate (GlcN-6-P) to galactosamine-6-phosphate (GalN-6-P).</text>
</comment>
<comment type="catalytic activity">
    <reaction evidence="2">
        <text>D-glucosamine 6-phosphate = D-galactosamine 6-phosphate</text>
        <dbReference type="Rhea" id="RHEA:18789"/>
        <dbReference type="ChEBI" id="CHEBI:58725"/>
        <dbReference type="ChEBI" id="CHEBI:71674"/>
        <dbReference type="EC" id="5.1.3.42"/>
    </reaction>
</comment>
<comment type="similarity">
    <text evidence="4">Belongs to the PGI/PMI family.</text>
</comment>